<sequence length="426" mass="48406">MVVDKIQAIRGMNDVLPDSTSIWRFIEQTFINCLVRYGYKEIRFPIVENTQLFKRTIGEITDIVEKEMYTFNDLNGDSITLRPEGTAGCVRACIEHGLLHNQQQKLWYLGPMFRHERPQKGRYRQFNQFGVEALGITGTGIELELISICRRLWIDLGFSQSVQLQVNSLGEINERQKYRSILVEYLRDHFQILDEDSKRRLDKNPLRVLDSKNPDLQQLIQNAPKLIDVLGDDSREHFQSFCNGLETLGIPYSINPVLVRGLDYYGQTVFEWVTDQLGSQATICAGGRYDMLVEFLGGAPTPAVGFALGLERIFLLMETLNLLNESNNKQSIFIIATNEEAILKALVMAESIRNAHPSLDVITNTAGGGFKSQFKKADKSGARLALILGEDEIAKEYVSIKDLRTEIEQISIPMTKINEFLQDYLA</sequence>
<organism>
    <name type="scientific">Legionella pneumophila subsp. pneumophila (strain Philadelphia 1 / ATCC 33152 / DSM 7513)</name>
    <dbReference type="NCBI Taxonomy" id="272624"/>
    <lineage>
        <taxon>Bacteria</taxon>
        <taxon>Pseudomonadati</taxon>
        <taxon>Pseudomonadota</taxon>
        <taxon>Gammaproteobacteria</taxon>
        <taxon>Legionellales</taxon>
        <taxon>Legionellaceae</taxon>
        <taxon>Legionella</taxon>
    </lineage>
</organism>
<reference key="1">
    <citation type="journal article" date="2004" name="Science">
        <title>The genomic sequence of the accidental pathogen Legionella pneumophila.</title>
        <authorList>
            <person name="Chien M."/>
            <person name="Morozova I."/>
            <person name="Shi S."/>
            <person name="Sheng H."/>
            <person name="Chen J."/>
            <person name="Gomez S.M."/>
            <person name="Asamani G."/>
            <person name="Hill K."/>
            <person name="Nuara J."/>
            <person name="Feder M."/>
            <person name="Rineer J."/>
            <person name="Greenberg J.J."/>
            <person name="Steshenko V."/>
            <person name="Park S.H."/>
            <person name="Zhao B."/>
            <person name="Teplitskaya E."/>
            <person name="Edwards J.R."/>
            <person name="Pampou S."/>
            <person name="Georghiou A."/>
            <person name="Chou I.-C."/>
            <person name="Iannuccilli W."/>
            <person name="Ulz M.E."/>
            <person name="Kim D.H."/>
            <person name="Geringer-Sameth A."/>
            <person name="Goldsberry C."/>
            <person name="Morozov P."/>
            <person name="Fischer S.G."/>
            <person name="Segal G."/>
            <person name="Qu X."/>
            <person name="Rzhetsky A."/>
            <person name="Zhang P."/>
            <person name="Cayanis E."/>
            <person name="De Jong P.J."/>
            <person name="Ju J."/>
            <person name="Kalachikov S."/>
            <person name="Shuman H.A."/>
            <person name="Russo J.J."/>
        </authorList>
    </citation>
    <scope>NUCLEOTIDE SEQUENCE [LARGE SCALE GENOMIC DNA]</scope>
    <source>
        <strain>Philadelphia 1 / ATCC 33152 / DSM 7513</strain>
    </source>
</reference>
<name>SYH_LEGPH</name>
<comment type="catalytic activity">
    <reaction evidence="1">
        <text>tRNA(His) + L-histidine + ATP = L-histidyl-tRNA(His) + AMP + diphosphate + H(+)</text>
        <dbReference type="Rhea" id="RHEA:17313"/>
        <dbReference type="Rhea" id="RHEA-COMP:9665"/>
        <dbReference type="Rhea" id="RHEA-COMP:9689"/>
        <dbReference type="ChEBI" id="CHEBI:15378"/>
        <dbReference type="ChEBI" id="CHEBI:30616"/>
        <dbReference type="ChEBI" id="CHEBI:33019"/>
        <dbReference type="ChEBI" id="CHEBI:57595"/>
        <dbReference type="ChEBI" id="CHEBI:78442"/>
        <dbReference type="ChEBI" id="CHEBI:78527"/>
        <dbReference type="ChEBI" id="CHEBI:456215"/>
        <dbReference type="EC" id="6.1.1.21"/>
    </reaction>
</comment>
<comment type="subunit">
    <text evidence="1">Homodimer.</text>
</comment>
<comment type="subcellular location">
    <subcellularLocation>
        <location evidence="1">Cytoplasm</location>
    </subcellularLocation>
</comment>
<comment type="similarity">
    <text evidence="1">Belongs to the class-II aminoacyl-tRNA synthetase family.</text>
</comment>
<proteinExistence type="inferred from homology"/>
<dbReference type="EC" id="6.1.1.21" evidence="1"/>
<dbReference type="EMBL" id="AE017354">
    <property type="protein sequence ID" value="AAU27626.1"/>
    <property type="molecule type" value="Genomic_DNA"/>
</dbReference>
<dbReference type="RefSeq" id="WP_010947273.1">
    <property type="nucleotide sequence ID" value="NC_002942.5"/>
</dbReference>
<dbReference type="RefSeq" id="YP_095573.1">
    <property type="nucleotide sequence ID" value="NC_002942.5"/>
</dbReference>
<dbReference type="SMR" id="Q5ZV96"/>
<dbReference type="STRING" id="272624.lpg1544"/>
<dbReference type="PaxDb" id="272624-lpg1544"/>
<dbReference type="GeneID" id="57035533"/>
<dbReference type="KEGG" id="lpn:lpg1544"/>
<dbReference type="PATRIC" id="fig|272624.6.peg.1617"/>
<dbReference type="eggNOG" id="COG0124">
    <property type="taxonomic scope" value="Bacteria"/>
</dbReference>
<dbReference type="HOGENOM" id="CLU_025113_1_1_6"/>
<dbReference type="OrthoDB" id="9800814at2"/>
<dbReference type="Proteomes" id="UP000000609">
    <property type="component" value="Chromosome"/>
</dbReference>
<dbReference type="GO" id="GO:0005737">
    <property type="term" value="C:cytoplasm"/>
    <property type="evidence" value="ECO:0007669"/>
    <property type="project" value="UniProtKB-SubCell"/>
</dbReference>
<dbReference type="GO" id="GO:0005524">
    <property type="term" value="F:ATP binding"/>
    <property type="evidence" value="ECO:0007669"/>
    <property type="project" value="UniProtKB-UniRule"/>
</dbReference>
<dbReference type="GO" id="GO:0004821">
    <property type="term" value="F:histidine-tRNA ligase activity"/>
    <property type="evidence" value="ECO:0007669"/>
    <property type="project" value="UniProtKB-UniRule"/>
</dbReference>
<dbReference type="GO" id="GO:0006427">
    <property type="term" value="P:histidyl-tRNA aminoacylation"/>
    <property type="evidence" value="ECO:0007669"/>
    <property type="project" value="UniProtKB-UniRule"/>
</dbReference>
<dbReference type="CDD" id="cd00773">
    <property type="entry name" value="HisRS-like_core"/>
    <property type="match status" value="1"/>
</dbReference>
<dbReference type="CDD" id="cd00859">
    <property type="entry name" value="HisRS_anticodon"/>
    <property type="match status" value="1"/>
</dbReference>
<dbReference type="FunFam" id="3.30.930.10:FF:000005">
    <property type="entry name" value="Histidine--tRNA ligase"/>
    <property type="match status" value="1"/>
</dbReference>
<dbReference type="Gene3D" id="3.40.50.800">
    <property type="entry name" value="Anticodon-binding domain"/>
    <property type="match status" value="1"/>
</dbReference>
<dbReference type="Gene3D" id="3.30.930.10">
    <property type="entry name" value="Bira Bifunctional Protein, Domain 2"/>
    <property type="match status" value="1"/>
</dbReference>
<dbReference type="HAMAP" id="MF_00127">
    <property type="entry name" value="His_tRNA_synth"/>
    <property type="match status" value="1"/>
</dbReference>
<dbReference type="InterPro" id="IPR006195">
    <property type="entry name" value="aa-tRNA-synth_II"/>
</dbReference>
<dbReference type="InterPro" id="IPR045864">
    <property type="entry name" value="aa-tRNA-synth_II/BPL/LPL"/>
</dbReference>
<dbReference type="InterPro" id="IPR004154">
    <property type="entry name" value="Anticodon-bd"/>
</dbReference>
<dbReference type="InterPro" id="IPR036621">
    <property type="entry name" value="Anticodon-bd_dom_sf"/>
</dbReference>
<dbReference type="InterPro" id="IPR015807">
    <property type="entry name" value="His-tRNA-ligase"/>
</dbReference>
<dbReference type="InterPro" id="IPR041715">
    <property type="entry name" value="HisRS-like_core"/>
</dbReference>
<dbReference type="InterPro" id="IPR004516">
    <property type="entry name" value="HisRS/HisZ"/>
</dbReference>
<dbReference type="InterPro" id="IPR033656">
    <property type="entry name" value="HisRS_anticodon"/>
</dbReference>
<dbReference type="NCBIfam" id="TIGR00442">
    <property type="entry name" value="hisS"/>
    <property type="match status" value="1"/>
</dbReference>
<dbReference type="PANTHER" id="PTHR43707:SF1">
    <property type="entry name" value="HISTIDINE--TRNA LIGASE, MITOCHONDRIAL-RELATED"/>
    <property type="match status" value="1"/>
</dbReference>
<dbReference type="PANTHER" id="PTHR43707">
    <property type="entry name" value="HISTIDYL-TRNA SYNTHETASE"/>
    <property type="match status" value="1"/>
</dbReference>
<dbReference type="Pfam" id="PF03129">
    <property type="entry name" value="HGTP_anticodon"/>
    <property type="match status" value="1"/>
</dbReference>
<dbReference type="Pfam" id="PF13393">
    <property type="entry name" value="tRNA-synt_His"/>
    <property type="match status" value="1"/>
</dbReference>
<dbReference type="PIRSF" id="PIRSF001549">
    <property type="entry name" value="His-tRNA_synth"/>
    <property type="match status" value="1"/>
</dbReference>
<dbReference type="SUPFAM" id="SSF52954">
    <property type="entry name" value="Class II aaRS ABD-related"/>
    <property type="match status" value="1"/>
</dbReference>
<dbReference type="SUPFAM" id="SSF55681">
    <property type="entry name" value="Class II aaRS and biotin synthetases"/>
    <property type="match status" value="1"/>
</dbReference>
<dbReference type="PROSITE" id="PS50862">
    <property type="entry name" value="AA_TRNA_LIGASE_II"/>
    <property type="match status" value="1"/>
</dbReference>
<gene>
    <name evidence="1" type="primary">hisS</name>
    <name type="ordered locus">lpg1544</name>
</gene>
<keyword id="KW-0030">Aminoacyl-tRNA synthetase</keyword>
<keyword id="KW-0067">ATP-binding</keyword>
<keyword id="KW-0963">Cytoplasm</keyword>
<keyword id="KW-0436">Ligase</keyword>
<keyword id="KW-0547">Nucleotide-binding</keyword>
<keyword id="KW-0648">Protein biosynthesis</keyword>
<keyword id="KW-1185">Reference proteome</keyword>
<accession>Q5ZV96</accession>
<feature type="chain" id="PRO_0000136183" description="Histidine--tRNA ligase">
    <location>
        <begin position="1"/>
        <end position="426"/>
    </location>
</feature>
<evidence type="ECO:0000255" key="1">
    <source>
        <dbReference type="HAMAP-Rule" id="MF_00127"/>
    </source>
</evidence>
<protein>
    <recommendedName>
        <fullName evidence="1">Histidine--tRNA ligase</fullName>
        <ecNumber evidence="1">6.1.1.21</ecNumber>
    </recommendedName>
    <alternativeName>
        <fullName evidence="1">Histidyl-tRNA synthetase</fullName>
        <shortName evidence="1">HisRS</shortName>
    </alternativeName>
</protein>